<organism>
    <name type="scientific">Gloeobacter violaceus (strain ATCC 29082 / PCC 7421)</name>
    <dbReference type="NCBI Taxonomy" id="251221"/>
    <lineage>
        <taxon>Bacteria</taxon>
        <taxon>Bacillati</taxon>
        <taxon>Cyanobacteriota</taxon>
        <taxon>Cyanophyceae</taxon>
        <taxon>Gloeobacterales</taxon>
        <taxon>Gloeobacteraceae</taxon>
        <taxon>Gloeobacter</taxon>
    </lineage>
</organism>
<comment type="function">
    <text evidence="1">Binds to the 23S rRNA.</text>
</comment>
<comment type="similarity">
    <text evidence="1">Belongs to the bacterial ribosomal protein bL9 family.</text>
</comment>
<gene>
    <name evidence="1" type="primary">rplI</name>
    <name evidence="1" type="synonym">rpl9</name>
    <name type="ordered locus">gll2632</name>
</gene>
<sequence>MGTKIVLKKDVDTLGKAGTLVEVAPGYARNYLIPQGLAVKATPGLVKEAEFRQAKRREIEAKHRADALETKKTLEALGFYEVFAPVGEDGNQLFGTVTNQDVAEVVASKAGITIDRREITIEEPIKRTGVYTVKARIFQDVVATLRLQVNAAG</sequence>
<proteinExistence type="inferred from homology"/>
<evidence type="ECO:0000255" key="1">
    <source>
        <dbReference type="HAMAP-Rule" id="MF_00503"/>
    </source>
</evidence>
<evidence type="ECO:0000305" key="2"/>
<protein>
    <recommendedName>
        <fullName evidence="1">Large ribosomal subunit protein bL9</fullName>
    </recommendedName>
    <alternativeName>
        <fullName evidence="2">50S ribosomal protein L9</fullName>
    </alternativeName>
</protein>
<keyword id="KW-1185">Reference proteome</keyword>
<keyword id="KW-0687">Ribonucleoprotein</keyword>
<keyword id="KW-0689">Ribosomal protein</keyword>
<keyword id="KW-0694">RNA-binding</keyword>
<keyword id="KW-0699">rRNA-binding</keyword>
<accession>Q7NHA5</accession>
<reference key="1">
    <citation type="journal article" date="2003" name="DNA Res.">
        <title>Complete genome structure of Gloeobacter violaceus PCC 7421, a cyanobacterium that lacks thylakoids.</title>
        <authorList>
            <person name="Nakamura Y."/>
            <person name="Kaneko T."/>
            <person name="Sato S."/>
            <person name="Mimuro M."/>
            <person name="Miyashita H."/>
            <person name="Tsuchiya T."/>
            <person name="Sasamoto S."/>
            <person name="Watanabe A."/>
            <person name="Kawashima K."/>
            <person name="Kishida Y."/>
            <person name="Kiyokawa C."/>
            <person name="Kohara M."/>
            <person name="Matsumoto M."/>
            <person name="Matsuno A."/>
            <person name="Nakazaki N."/>
            <person name="Shimpo S."/>
            <person name="Takeuchi C."/>
            <person name="Yamada M."/>
            <person name="Tabata S."/>
        </authorList>
    </citation>
    <scope>NUCLEOTIDE SEQUENCE [LARGE SCALE GENOMIC DNA]</scope>
    <source>
        <strain>ATCC 29082 / PCC 7421</strain>
    </source>
</reference>
<dbReference type="EMBL" id="BA000045">
    <property type="protein sequence ID" value="BAC90573.1"/>
    <property type="molecule type" value="Genomic_DNA"/>
</dbReference>
<dbReference type="RefSeq" id="NP_925578.1">
    <property type="nucleotide sequence ID" value="NC_005125.1"/>
</dbReference>
<dbReference type="RefSeq" id="WP_011142626.1">
    <property type="nucleotide sequence ID" value="NC_005125.1"/>
</dbReference>
<dbReference type="SMR" id="Q7NHA5"/>
<dbReference type="FunCoup" id="Q7NHA5">
    <property type="interactions" value="267"/>
</dbReference>
<dbReference type="STRING" id="251221.gene:10760132"/>
<dbReference type="EnsemblBacteria" id="BAC90573">
    <property type="protein sequence ID" value="BAC90573"/>
    <property type="gene ID" value="BAC90573"/>
</dbReference>
<dbReference type="KEGG" id="gvi:gll2632"/>
<dbReference type="PATRIC" id="fig|251221.4.peg.2669"/>
<dbReference type="eggNOG" id="COG0359">
    <property type="taxonomic scope" value="Bacteria"/>
</dbReference>
<dbReference type="HOGENOM" id="CLU_078938_3_0_3"/>
<dbReference type="InParanoid" id="Q7NHA5"/>
<dbReference type="OrthoDB" id="9788336at2"/>
<dbReference type="PhylomeDB" id="Q7NHA5"/>
<dbReference type="Proteomes" id="UP000000557">
    <property type="component" value="Chromosome"/>
</dbReference>
<dbReference type="GO" id="GO:0022625">
    <property type="term" value="C:cytosolic large ribosomal subunit"/>
    <property type="evidence" value="ECO:0000318"/>
    <property type="project" value="GO_Central"/>
</dbReference>
<dbReference type="GO" id="GO:0019843">
    <property type="term" value="F:rRNA binding"/>
    <property type="evidence" value="ECO:0007669"/>
    <property type="project" value="UniProtKB-UniRule"/>
</dbReference>
<dbReference type="GO" id="GO:0003735">
    <property type="term" value="F:structural constituent of ribosome"/>
    <property type="evidence" value="ECO:0007669"/>
    <property type="project" value="InterPro"/>
</dbReference>
<dbReference type="GO" id="GO:0006412">
    <property type="term" value="P:translation"/>
    <property type="evidence" value="ECO:0007669"/>
    <property type="project" value="UniProtKB-UniRule"/>
</dbReference>
<dbReference type="FunFam" id="3.40.5.10:FF:000003">
    <property type="entry name" value="50S ribosomal protein L9"/>
    <property type="match status" value="1"/>
</dbReference>
<dbReference type="Gene3D" id="3.10.430.100">
    <property type="entry name" value="Ribosomal protein L9, C-terminal domain"/>
    <property type="match status" value="1"/>
</dbReference>
<dbReference type="Gene3D" id="3.40.5.10">
    <property type="entry name" value="Ribosomal protein L9, N-terminal domain"/>
    <property type="match status" value="1"/>
</dbReference>
<dbReference type="HAMAP" id="MF_00503">
    <property type="entry name" value="Ribosomal_bL9"/>
    <property type="match status" value="1"/>
</dbReference>
<dbReference type="InterPro" id="IPR000244">
    <property type="entry name" value="Ribosomal_bL9"/>
</dbReference>
<dbReference type="InterPro" id="IPR009027">
    <property type="entry name" value="Ribosomal_bL9/RNase_H1_N"/>
</dbReference>
<dbReference type="InterPro" id="IPR020594">
    <property type="entry name" value="Ribosomal_bL9_bac/chp"/>
</dbReference>
<dbReference type="InterPro" id="IPR020069">
    <property type="entry name" value="Ribosomal_bL9_C"/>
</dbReference>
<dbReference type="InterPro" id="IPR036791">
    <property type="entry name" value="Ribosomal_bL9_C_sf"/>
</dbReference>
<dbReference type="InterPro" id="IPR020070">
    <property type="entry name" value="Ribosomal_bL9_N"/>
</dbReference>
<dbReference type="InterPro" id="IPR036935">
    <property type="entry name" value="Ribosomal_bL9_N_sf"/>
</dbReference>
<dbReference type="NCBIfam" id="TIGR00158">
    <property type="entry name" value="L9"/>
    <property type="match status" value="1"/>
</dbReference>
<dbReference type="PANTHER" id="PTHR21368">
    <property type="entry name" value="50S RIBOSOMAL PROTEIN L9"/>
    <property type="match status" value="1"/>
</dbReference>
<dbReference type="Pfam" id="PF03948">
    <property type="entry name" value="Ribosomal_L9_C"/>
    <property type="match status" value="1"/>
</dbReference>
<dbReference type="Pfam" id="PF01281">
    <property type="entry name" value="Ribosomal_L9_N"/>
    <property type="match status" value="1"/>
</dbReference>
<dbReference type="SUPFAM" id="SSF55658">
    <property type="entry name" value="L9 N-domain-like"/>
    <property type="match status" value="1"/>
</dbReference>
<dbReference type="SUPFAM" id="SSF55653">
    <property type="entry name" value="Ribosomal protein L9 C-domain"/>
    <property type="match status" value="1"/>
</dbReference>
<dbReference type="PROSITE" id="PS00651">
    <property type="entry name" value="RIBOSOMAL_L9"/>
    <property type="match status" value="1"/>
</dbReference>
<feature type="chain" id="PRO_0000236528" description="Large ribosomal subunit protein bL9">
    <location>
        <begin position="1"/>
        <end position="153"/>
    </location>
</feature>
<name>RL9_GLOVI</name>